<proteinExistence type="inferred from homology"/>
<evidence type="ECO:0000255" key="1">
    <source>
        <dbReference type="HAMAP-Rule" id="MF_00402"/>
    </source>
</evidence>
<evidence type="ECO:0000305" key="2"/>
<sequence length="115" mass="13470">MNNYIRNIENQYKKKNIPSFKSGDSIIVKIWILEGEKKRIQSFEGIVIAKRNRNLNSSFTVRKISNGEGVERKFLIHSPNIHEIKIVRKGLVRKAKLYYLRSRIGKSARIKESLK</sequence>
<accession>Q057I2</accession>
<dbReference type="EMBL" id="CP000263">
    <property type="protein sequence ID" value="ABJ90717.1"/>
    <property type="molecule type" value="Genomic_DNA"/>
</dbReference>
<dbReference type="RefSeq" id="WP_011672636.1">
    <property type="nucleotide sequence ID" value="NC_008513.1"/>
</dbReference>
<dbReference type="SMR" id="Q057I2"/>
<dbReference type="STRING" id="372461.BCc_249"/>
<dbReference type="KEGG" id="bcc:BCc_249"/>
<dbReference type="eggNOG" id="COG0335">
    <property type="taxonomic scope" value="Bacteria"/>
</dbReference>
<dbReference type="HOGENOM" id="CLU_103507_2_2_6"/>
<dbReference type="OrthoDB" id="9803541at2"/>
<dbReference type="Proteomes" id="UP000000669">
    <property type="component" value="Chromosome"/>
</dbReference>
<dbReference type="GO" id="GO:0022625">
    <property type="term" value="C:cytosolic large ribosomal subunit"/>
    <property type="evidence" value="ECO:0007669"/>
    <property type="project" value="TreeGrafter"/>
</dbReference>
<dbReference type="GO" id="GO:0003735">
    <property type="term" value="F:structural constituent of ribosome"/>
    <property type="evidence" value="ECO:0007669"/>
    <property type="project" value="InterPro"/>
</dbReference>
<dbReference type="GO" id="GO:0006412">
    <property type="term" value="P:translation"/>
    <property type="evidence" value="ECO:0007669"/>
    <property type="project" value="UniProtKB-UniRule"/>
</dbReference>
<dbReference type="FunFam" id="2.30.30.790:FF:000001">
    <property type="entry name" value="50S ribosomal protein L19"/>
    <property type="match status" value="1"/>
</dbReference>
<dbReference type="Gene3D" id="2.30.30.790">
    <property type="match status" value="1"/>
</dbReference>
<dbReference type="HAMAP" id="MF_00402">
    <property type="entry name" value="Ribosomal_bL19"/>
    <property type="match status" value="1"/>
</dbReference>
<dbReference type="InterPro" id="IPR001857">
    <property type="entry name" value="Ribosomal_bL19"/>
</dbReference>
<dbReference type="InterPro" id="IPR018257">
    <property type="entry name" value="Ribosomal_bL19_CS"/>
</dbReference>
<dbReference type="InterPro" id="IPR038657">
    <property type="entry name" value="Ribosomal_bL19_sf"/>
</dbReference>
<dbReference type="InterPro" id="IPR008991">
    <property type="entry name" value="Translation_prot_SH3-like_sf"/>
</dbReference>
<dbReference type="NCBIfam" id="TIGR01024">
    <property type="entry name" value="rplS_bact"/>
    <property type="match status" value="1"/>
</dbReference>
<dbReference type="PANTHER" id="PTHR15680:SF9">
    <property type="entry name" value="LARGE RIBOSOMAL SUBUNIT PROTEIN BL19M"/>
    <property type="match status" value="1"/>
</dbReference>
<dbReference type="PANTHER" id="PTHR15680">
    <property type="entry name" value="RIBOSOMAL PROTEIN L19"/>
    <property type="match status" value="1"/>
</dbReference>
<dbReference type="Pfam" id="PF01245">
    <property type="entry name" value="Ribosomal_L19"/>
    <property type="match status" value="1"/>
</dbReference>
<dbReference type="PIRSF" id="PIRSF002191">
    <property type="entry name" value="Ribosomal_L19"/>
    <property type="match status" value="1"/>
</dbReference>
<dbReference type="PRINTS" id="PR00061">
    <property type="entry name" value="RIBOSOMALL19"/>
</dbReference>
<dbReference type="SUPFAM" id="SSF50104">
    <property type="entry name" value="Translation proteins SH3-like domain"/>
    <property type="match status" value="1"/>
</dbReference>
<dbReference type="PROSITE" id="PS01015">
    <property type="entry name" value="RIBOSOMAL_L19"/>
    <property type="match status" value="1"/>
</dbReference>
<organism>
    <name type="scientific">Buchnera aphidicola subsp. Cinara cedri (strain Cc)</name>
    <dbReference type="NCBI Taxonomy" id="372461"/>
    <lineage>
        <taxon>Bacteria</taxon>
        <taxon>Pseudomonadati</taxon>
        <taxon>Pseudomonadota</taxon>
        <taxon>Gammaproteobacteria</taxon>
        <taxon>Enterobacterales</taxon>
        <taxon>Erwiniaceae</taxon>
        <taxon>Buchnera</taxon>
    </lineage>
</organism>
<gene>
    <name evidence="1" type="primary">rplS</name>
    <name type="ordered locus">BCc_249</name>
</gene>
<reference key="1">
    <citation type="journal article" date="2006" name="Science">
        <title>A small microbial genome: the end of a long symbiotic relationship?</title>
        <authorList>
            <person name="Perez-Brocal V."/>
            <person name="Gil R."/>
            <person name="Ramos S."/>
            <person name="Lamelas A."/>
            <person name="Postigo M."/>
            <person name="Michelena J.M."/>
            <person name="Silva F.J."/>
            <person name="Moya A."/>
            <person name="Latorre A."/>
        </authorList>
    </citation>
    <scope>NUCLEOTIDE SEQUENCE [LARGE SCALE GENOMIC DNA]</scope>
    <source>
        <strain>Cc</strain>
    </source>
</reference>
<name>RL19_BUCCC</name>
<protein>
    <recommendedName>
        <fullName evidence="1">Large ribosomal subunit protein bL19</fullName>
    </recommendedName>
    <alternativeName>
        <fullName evidence="2">50S ribosomal protein L19</fullName>
    </alternativeName>
</protein>
<keyword id="KW-1185">Reference proteome</keyword>
<keyword id="KW-0687">Ribonucleoprotein</keyword>
<keyword id="KW-0689">Ribosomal protein</keyword>
<feature type="chain" id="PRO_1000072241" description="Large ribosomal subunit protein bL19">
    <location>
        <begin position="1"/>
        <end position="115"/>
    </location>
</feature>
<comment type="function">
    <text evidence="1">This protein is located at the 30S-50S ribosomal subunit interface and may play a role in the structure and function of the aminoacyl-tRNA binding site.</text>
</comment>
<comment type="similarity">
    <text evidence="1">Belongs to the bacterial ribosomal protein bL19 family.</text>
</comment>